<reference key="1">
    <citation type="journal article" date="1980" name="Nature">
        <title>Sequence of the lactose permease gene.</title>
        <authorList>
            <person name="Buechel D.E."/>
            <person name="Gronenborn B."/>
            <person name="Mueller-Hill B."/>
        </authorList>
    </citation>
    <scope>NUCLEOTIDE SEQUENCE [GENOMIC DNA]</scope>
</reference>
<reference key="2">
    <citation type="submission" date="1990-09" db="EMBL/GenBank/DDBJ databases">
        <authorList>
            <person name="Pastore J.C."/>
            <person name="Larigan J.D."/>
            <person name="Consler T.G."/>
            <person name="Kaback H.R."/>
        </authorList>
    </citation>
    <scope>NUCLEOTIDE SEQUENCE [GENOMIC DNA]</scope>
    <source>
        <strain>K12</strain>
    </source>
</reference>
<reference key="3">
    <citation type="submission" date="1997-01" db="EMBL/GenBank/DDBJ databases">
        <title>Sequence of minutes 4-25 of Escherichia coli.</title>
        <authorList>
            <person name="Chung E."/>
            <person name="Allen E."/>
            <person name="Araujo R."/>
            <person name="Aparicio A.M."/>
            <person name="Davis K."/>
            <person name="Duncan M."/>
            <person name="Federspiel N."/>
            <person name="Hyman R."/>
            <person name="Kalman S."/>
            <person name="Komp C."/>
            <person name="Kurdi O."/>
            <person name="Lew H."/>
            <person name="Lin D."/>
            <person name="Namath A."/>
            <person name="Oefner P."/>
            <person name="Roberts D."/>
            <person name="Schramm S."/>
            <person name="Davis R.W."/>
        </authorList>
    </citation>
    <scope>NUCLEOTIDE SEQUENCE [LARGE SCALE GENOMIC DNA]</scope>
    <source>
        <strain>K12 / MG1655 / ATCC 47076</strain>
    </source>
</reference>
<reference key="4">
    <citation type="journal article" date="1997" name="Science">
        <title>The complete genome sequence of Escherichia coli K-12.</title>
        <authorList>
            <person name="Blattner F.R."/>
            <person name="Plunkett G. III"/>
            <person name="Bloch C.A."/>
            <person name="Perna N.T."/>
            <person name="Burland V."/>
            <person name="Riley M."/>
            <person name="Collado-Vides J."/>
            <person name="Glasner J.D."/>
            <person name="Rode C.K."/>
            <person name="Mayhew G.F."/>
            <person name="Gregor J."/>
            <person name="Davis N.W."/>
            <person name="Kirkpatrick H.A."/>
            <person name="Goeden M.A."/>
            <person name="Rose D.J."/>
            <person name="Mau B."/>
            <person name="Shao Y."/>
        </authorList>
    </citation>
    <scope>NUCLEOTIDE SEQUENCE [LARGE SCALE GENOMIC DNA]</scope>
    <source>
        <strain>K12 / MG1655 / ATCC 47076</strain>
    </source>
</reference>
<reference key="5">
    <citation type="journal article" date="2006" name="Mol. Syst. Biol.">
        <title>Highly accurate genome sequences of Escherichia coli K-12 strains MG1655 and W3110.</title>
        <authorList>
            <person name="Hayashi K."/>
            <person name="Morooka N."/>
            <person name="Yamamoto Y."/>
            <person name="Fujita K."/>
            <person name="Isono K."/>
            <person name="Choi S."/>
            <person name="Ohtsubo E."/>
            <person name="Baba T."/>
            <person name="Wanner B.L."/>
            <person name="Mori H."/>
            <person name="Horiuchi T."/>
        </authorList>
    </citation>
    <scope>NUCLEOTIDE SEQUENCE [LARGE SCALE GENOMIC DNA]</scope>
    <source>
        <strain>K12 / W3110 / ATCC 27325 / DSM 5911</strain>
    </source>
</reference>
<reference key="6">
    <citation type="journal article" date="1980" name="J. Biol. Chem.">
        <title>Solubilization and reconstitution of the lactose transport system from Escherichia coli.</title>
        <authorList>
            <person name="Newman M.J."/>
            <person name="Wilson T.H."/>
        </authorList>
    </citation>
    <scope>FUNCTION</scope>
    <scope>CATALYTIC ACTIVITY</scope>
    <scope>ACTIVITY REGULATION</scope>
    <scope>SUBCELLULAR LOCATION</scope>
</reference>
<reference key="7">
    <citation type="journal article" date="1981" name="J. Biol. Chem.">
        <title>Purification and reconstitution of functional lactose carrier from Escherichia coli.</title>
        <authorList>
            <person name="Newman M.J."/>
            <person name="Foster D.L."/>
            <person name="Wilson T.H."/>
            <person name="Kaback H.R."/>
        </authorList>
    </citation>
    <scope>FUNCTION</scope>
    <scope>CATALYTIC ACTIVITY</scope>
    <scope>SUBCELLULAR LOCATION</scope>
</reference>
<reference key="8">
    <citation type="journal article" date="1986" name="EMBO J.">
        <title>The distribution of positively charged residues in bacterial inner membrane proteins correlates with the trans-membrane topology.</title>
        <authorList>
            <person name="von Heijne G."/>
        </authorList>
    </citation>
    <scope>TOPOLOGY</scope>
</reference>
<reference key="9">
    <citation type="journal article" date="1990" name="Proc. Natl. Acad. Sci. U.S.A.">
        <title>lac permease of Escherichia coli: topology and sequence elements promoting membrane insertion.</title>
        <authorList>
            <person name="Calamia J."/>
            <person name="Manoil C."/>
        </authorList>
    </citation>
    <scope>SUBCELLULAR LOCATION</scope>
    <scope>TOPOLOGY</scope>
</reference>
<reference key="10">
    <citation type="journal article" date="1995" name="Biochemistry">
        <title>Membrane topology of helices VII and XI in the lactose permease of Escherichia coli studied by lacY-phoA fusion analysis and site-directed spectroscopy.</title>
        <authorList>
            <person name="Ujwal M.L."/>
            <person name="Jung H."/>
            <person name="Bibi E."/>
            <person name="Manoil C."/>
            <person name="Altenbach C."/>
            <person name="Hubbell W.L."/>
            <person name="Kaback H.R."/>
        </authorList>
    </citation>
    <scope>TOPOLOGY</scope>
</reference>
<reference key="11">
    <citation type="journal article" date="1991" name="Biochim. Biophys. Acta">
        <title>The interaction between aspartic acid 237 and lysine 358 in the lactose carrier of Escherichia coli.</title>
        <authorList>
            <person name="King S.C."/>
            <person name="Hansen C.L."/>
            <person name="Wilson T.H."/>
        </authorList>
    </citation>
    <scope>FUNCTION</scope>
    <scope>CATALYTIC ACTIVITY</scope>
    <scope>MUTAGENESIS OF ASP-237 AND LYS-358</scope>
</reference>
<reference key="12">
    <citation type="journal article" date="1992" name="J. Bacteriol.">
        <title>Amino acid substitution in the lactose carrier protein with the use of amber suppressors.</title>
        <authorList>
            <person name="Huang A.-M."/>
            <person name="Lee J.-I."/>
            <person name="King S.C."/>
            <person name="Wilson T.H."/>
        </authorList>
    </citation>
    <scope>MUTAGENESIS</scope>
</reference>
<reference key="13">
    <citation type="journal article" date="1990" name="Biochim. Biophys. Acta">
        <title>The lac permease of Escherichia coli: a prototypic energy-transducing membrane protein.</title>
        <authorList>
            <person name="Kaback H.R."/>
        </authorList>
    </citation>
    <scope>REVIEW</scope>
</reference>
<reference key="14">
    <citation type="journal article" date="1999" name="Proc. Natl. Acad. Sci. U.S.A.">
        <title>Toward the bilayer proteome, electrospray ionization-mass spectrometry of large, intact transmembrane proteins.</title>
        <authorList>
            <person name="Whitelegge J.P."/>
            <person name="le Coutre J."/>
            <person name="Lee J.C."/>
            <person name="Engel C.K."/>
            <person name="Prive G.G."/>
            <person name="Faull K.F."/>
            <person name="Kaback H.R."/>
        </authorList>
    </citation>
    <scope>FORMYLATION AT MET-1</scope>
    <scope>MASS SPECTROMETRY</scope>
</reference>
<reference key="15">
    <citation type="journal article" date="2005" name="Science">
        <title>Global topology analysis of the Escherichia coli inner membrane proteome.</title>
        <authorList>
            <person name="Daley D.O."/>
            <person name="Rapp M."/>
            <person name="Granseth E."/>
            <person name="Melen K."/>
            <person name="Drew D."/>
            <person name="von Heijne G."/>
        </authorList>
    </citation>
    <scope>TOPOLOGY [LARGE SCALE ANALYSIS]</scope>
    <source>
        <strain>K12 / MG1655 / ATCC 47076</strain>
    </source>
</reference>
<reference key="16">
    <citation type="journal article" date="2008" name="J. Mol. Biol.">
        <title>Substrate selectivity of the melibiose permease (MelY) from Enterobacter cloacae.</title>
        <authorList>
            <person name="Tavoulari S."/>
            <person name="Frillingos S."/>
        </authorList>
    </citation>
    <scope>FUNCTION</scope>
    <scope>BIOPHYSICOCHEMICAL PROPERTIES</scope>
    <scope>MUTAGENESIS OF LEU-65; GLY-96; ALA-122; VAL-264; ALA-279; CYS-355 AND VAL-367</scope>
</reference>
<reference key="17">
    <citation type="journal article" date="2011" name="Biochemistry">
        <title>Sugar recognition by CscB and LacY.</title>
        <authorList>
            <person name="Sugihara J."/>
            <person name="Smirnova I."/>
            <person name="Kasho V."/>
            <person name="Kaback H.R."/>
        </authorList>
    </citation>
    <scope>FUNCTION</scope>
    <scope>BIOPHYSICOCHEMICAL PROPERTIES</scope>
</reference>
<reference evidence="12 13" key="18">
    <citation type="journal article" date="2003" name="Science">
        <title>Structure and mechanism of the lactose permease of Escherichia coli.</title>
        <authorList>
            <person name="Abramson J."/>
            <person name="Smirnova I."/>
            <person name="Kasho V."/>
            <person name="Verner G."/>
            <person name="Kaback H.R."/>
            <person name="Iwata S."/>
        </authorList>
    </citation>
    <scope>X-RAY CRYSTALLOGRAPHY (3.5 ANGSTROMS) OF MUTANT GLY-154</scope>
</reference>
<feature type="chain" id="PRO_0000196184" description="Lactose permease">
    <location>
        <begin position="1"/>
        <end position="417"/>
    </location>
</feature>
<feature type="topological domain" description="Cytoplasmic" evidence="5">
    <location>
        <begin position="1"/>
        <end position="7"/>
    </location>
</feature>
<feature type="transmembrane region" description="Helical; Name=1">
    <location>
        <begin position="8"/>
        <end position="34"/>
    </location>
</feature>
<feature type="topological domain" description="Periplasmic" evidence="5">
    <location>
        <begin position="35"/>
        <end position="41"/>
    </location>
</feature>
<feature type="transmembrane region" description="Helical; Name=2">
    <location>
        <begin position="42"/>
        <end position="70"/>
    </location>
</feature>
<feature type="topological domain" description="Cytoplasmic" evidence="5">
    <location>
        <begin position="71"/>
        <end position="74"/>
    </location>
</feature>
<feature type="transmembrane region" description="Helical; Name=3">
    <location>
        <begin position="75"/>
        <end position="100"/>
    </location>
</feature>
<feature type="topological domain" description="Periplasmic" evidence="5">
    <location>
        <begin position="101"/>
        <end position="104"/>
    </location>
</feature>
<feature type="transmembrane region" description="Helical; Name=4">
    <location>
        <begin position="105"/>
        <end position="129"/>
    </location>
</feature>
<feature type="topological domain" description="Cytoplasmic" evidence="5">
    <location>
        <begin position="130"/>
        <end position="140"/>
    </location>
</feature>
<feature type="transmembrane region" description="Helical; Name=5">
    <location>
        <begin position="141"/>
        <end position="163"/>
    </location>
</feature>
<feature type="topological domain" description="Periplasmic" evidence="5">
    <location>
        <begin position="164"/>
        <end position="166"/>
    </location>
</feature>
<feature type="transmembrane region" description="Helical; Name=6">
    <location>
        <begin position="167"/>
        <end position="186"/>
    </location>
</feature>
<feature type="topological domain" description="Cytoplasmic" evidence="5">
    <location>
        <begin position="187"/>
        <end position="220"/>
    </location>
</feature>
<feature type="transmembrane region" description="Helical; Name=7">
    <location>
        <begin position="221"/>
        <end position="249"/>
    </location>
</feature>
<feature type="topological domain" description="Periplasmic" evidence="5">
    <location>
        <begin position="250"/>
        <end position="253"/>
    </location>
</feature>
<feature type="transmembrane region" description="Helical; Name=8">
    <location>
        <begin position="254"/>
        <end position="278"/>
    </location>
</feature>
<feature type="topological domain" description="Cytoplasmic" evidence="5">
    <location>
        <begin position="279"/>
        <end position="288"/>
    </location>
</feature>
<feature type="transmembrane region" description="Helical; Name=9">
    <location>
        <begin position="289"/>
        <end position="308"/>
    </location>
</feature>
<feature type="topological domain" description="Periplasmic" evidence="5">
    <location>
        <begin position="309"/>
        <end position="311"/>
    </location>
</feature>
<feature type="transmembrane region" description="Helical; Name=10">
    <location>
        <begin position="312"/>
        <end position="334"/>
    </location>
</feature>
<feature type="topological domain" description="Cytoplasmic" evidence="5">
    <location>
        <begin position="335"/>
        <end position="346"/>
    </location>
</feature>
<feature type="transmembrane region" description="Helical; Name=11">
    <location>
        <begin position="347"/>
        <end position="374"/>
    </location>
</feature>
<feature type="topological domain" description="Periplasmic" evidence="5">
    <location>
        <begin position="375"/>
        <end position="377"/>
    </location>
</feature>
<feature type="transmembrane region" description="Helical; Name=12">
    <location>
        <begin position="378"/>
        <end position="398"/>
    </location>
</feature>
<feature type="topological domain" description="Cytoplasmic" evidence="2 5">
    <location>
        <begin position="399"/>
        <end position="417"/>
    </location>
</feature>
<feature type="site" description="Substrate binding" evidence="11">
    <location>
        <position position="126"/>
    </location>
</feature>
<feature type="site" description="Substrate binding" evidence="11">
    <location>
        <position position="144"/>
    </location>
</feature>
<feature type="site" description="Substrate binding and proton translocation" evidence="11">
    <location>
        <position position="269"/>
    </location>
</feature>
<feature type="site" description="Proton translocation" evidence="11">
    <location>
        <position position="302"/>
    </location>
</feature>
<feature type="site" description="Proton translocation" evidence="11">
    <location>
        <position position="322"/>
    </location>
</feature>
<feature type="site" description="Proton translocation" evidence="11">
    <location>
        <position position="325"/>
    </location>
</feature>
<feature type="modified residue" description="N-formylmethionine; partial" evidence="1">
    <location>
        <position position="1"/>
    </location>
</feature>
<feature type="mutagenesis site" description="No change in transport activity." evidence="3">
    <original>L</original>
    <variation>V</variation>
    <location>
        <position position="65"/>
    </location>
</feature>
<feature type="mutagenesis site" description="No change in transport activity." evidence="3">
    <original>G</original>
    <variation>A</variation>
    <location>
        <position position="96"/>
    </location>
</feature>
<feature type="mutagenesis site" description="No change in transport activity." evidence="3">
    <original>A</original>
    <variation>S</variation>
    <location>
        <position position="122"/>
    </location>
</feature>
<feature type="mutagenesis site" description="Loss of activity." evidence="4">
    <original>D</original>
    <variation>N</variation>
    <variation>G</variation>
    <location>
        <position position="237"/>
    </location>
</feature>
<feature type="mutagenesis site" description="No change in transport activity." evidence="3">
    <original>V</original>
    <variation>A</variation>
    <location>
        <position position="264"/>
    </location>
</feature>
<feature type="mutagenesis site" description="No change in transport activity." evidence="3">
    <original>A</original>
    <variation>S</variation>
    <location>
        <position position="279"/>
    </location>
</feature>
<feature type="mutagenesis site" description="No change in transport activity." evidence="3">
    <original>C</original>
    <variation>Q</variation>
    <location>
        <position position="355"/>
    </location>
</feature>
<feature type="mutagenesis site" description="Loss of activity." evidence="4">
    <original>K</original>
    <variation>T</variation>
    <location>
        <position position="358"/>
    </location>
</feature>
<feature type="mutagenesis site" description="Increases transport of melibiose and impairs transport of TMG." evidence="3">
    <original>V</original>
    <variation>A</variation>
    <location>
        <position position="367"/>
    </location>
</feature>
<feature type="turn" evidence="15">
    <location>
        <begin position="2"/>
        <end position="4"/>
    </location>
</feature>
<feature type="helix" evidence="17">
    <location>
        <begin position="7"/>
        <end position="26"/>
    </location>
</feature>
<feature type="turn" evidence="15">
    <location>
        <begin position="27"/>
        <end position="29"/>
    </location>
</feature>
<feature type="helix" evidence="17">
    <location>
        <begin position="30"/>
        <end position="37"/>
    </location>
</feature>
<feature type="turn" evidence="15">
    <location>
        <begin position="42"/>
        <end position="44"/>
    </location>
</feature>
<feature type="helix" evidence="17">
    <location>
        <begin position="45"/>
        <end position="70"/>
    </location>
</feature>
<feature type="helix" evidence="16">
    <location>
        <begin position="71"/>
        <end position="73"/>
    </location>
</feature>
<feature type="helix" evidence="17">
    <location>
        <begin position="75"/>
        <end position="84"/>
    </location>
</feature>
<feature type="helix" evidence="17">
    <location>
        <begin position="87"/>
        <end position="93"/>
    </location>
</feature>
<feature type="helix" evidence="17">
    <location>
        <begin position="95"/>
        <end position="101"/>
    </location>
</feature>
<feature type="helix" evidence="17">
    <location>
        <begin position="103"/>
        <end position="117"/>
    </location>
</feature>
<feature type="turn" evidence="17">
    <location>
        <begin position="118"/>
        <end position="120"/>
    </location>
</feature>
<feature type="helix" evidence="17">
    <location>
        <begin position="121"/>
        <end position="135"/>
    </location>
</feature>
<feature type="strand" evidence="16">
    <location>
        <begin position="136"/>
        <end position="138"/>
    </location>
</feature>
<feature type="helix" evidence="17">
    <location>
        <begin position="140"/>
        <end position="161"/>
    </location>
</feature>
<feature type="turn" evidence="17">
    <location>
        <begin position="162"/>
        <end position="164"/>
    </location>
</feature>
<feature type="helix" evidence="17">
    <location>
        <begin position="168"/>
        <end position="186"/>
    </location>
</feature>
<feature type="strand" evidence="14">
    <location>
        <begin position="193"/>
        <end position="195"/>
    </location>
</feature>
<feature type="strand" evidence="15">
    <location>
        <begin position="197"/>
        <end position="203"/>
    </location>
</feature>
<feature type="helix" evidence="17">
    <location>
        <begin position="210"/>
        <end position="214"/>
    </location>
</feature>
<feature type="helix" evidence="17">
    <location>
        <begin position="215"/>
        <end position="218"/>
    </location>
</feature>
<feature type="helix" evidence="17">
    <location>
        <begin position="220"/>
        <end position="231"/>
    </location>
</feature>
<feature type="helix" evidence="17">
    <location>
        <begin position="233"/>
        <end position="239"/>
    </location>
</feature>
<feature type="helix" evidence="17">
    <location>
        <begin position="243"/>
        <end position="248"/>
    </location>
</feature>
<feature type="strand" evidence="17">
    <location>
        <begin position="252"/>
        <end position="254"/>
    </location>
</feature>
<feature type="helix" evidence="17">
    <location>
        <begin position="255"/>
        <end position="285"/>
    </location>
</feature>
<feature type="helix" evidence="17">
    <location>
        <begin position="288"/>
        <end position="308"/>
    </location>
</feature>
<feature type="helix" evidence="17">
    <location>
        <begin position="312"/>
        <end position="320"/>
    </location>
</feature>
<feature type="helix" evidence="17">
    <location>
        <begin position="322"/>
        <end position="340"/>
    </location>
</feature>
<feature type="helix" evidence="17">
    <location>
        <begin position="343"/>
        <end position="345"/>
    </location>
</feature>
<feature type="helix" evidence="17">
    <location>
        <begin position="346"/>
        <end position="353"/>
    </location>
</feature>
<feature type="helix" evidence="17">
    <location>
        <begin position="356"/>
        <end position="375"/>
    </location>
</feature>
<feature type="helix" evidence="17">
    <location>
        <begin position="378"/>
        <end position="399"/>
    </location>
</feature>
<feature type="strand" evidence="17">
    <location>
        <begin position="400"/>
        <end position="402"/>
    </location>
</feature>
<feature type="helix" evidence="17">
    <location>
        <begin position="406"/>
        <end position="408"/>
    </location>
</feature>
<feature type="turn" evidence="15">
    <location>
        <begin position="414"/>
        <end position="416"/>
    </location>
</feature>
<protein>
    <recommendedName>
        <fullName evidence="9">Lactose permease</fullName>
    </recommendedName>
    <alternativeName>
        <fullName>Lactose-proton symport</fullName>
    </alternativeName>
</protein>
<keyword id="KW-0002">3D-structure</keyword>
<keyword id="KW-0997">Cell inner membrane</keyword>
<keyword id="KW-1003">Cell membrane</keyword>
<keyword id="KW-0291">Formylation</keyword>
<keyword id="KW-0472">Membrane</keyword>
<keyword id="KW-1185">Reference proteome</keyword>
<keyword id="KW-0762">Sugar transport</keyword>
<keyword id="KW-0769">Symport</keyword>
<keyword id="KW-0812">Transmembrane</keyword>
<keyword id="KW-1133">Transmembrane helix</keyword>
<keyword id="KW-0813">Transport</keyword>
<organism>
    <name type="scientific">Escherichia coli (strain K12)</name>
    <dbReference type="NCBI Taxonomy" id="83333"/>
    <lineage>
        <taxon>Bacteria</taxon>
        <taxon>Pseudomonadati</taxon>
        <taxon>Pseudomonadota</taxon>
        <taxon>Gammaproteobacteria</taxon>
        <taxon>Enterobacterales</taxon>
        <taxon>Enterobacteriaceae</taxon>
        <taxon>Escherichia</taxon>
    </lineage>
</organism>
<sequence length="417" mass="46503">MYYLKNTNFWMFGLFFFFYFFIMGAYFPFFPIWLHDINHISKSDTGIIFAAISLFSLLFQPLFGLLSDKLGLRKYLLWIITGMLVMFAPFFIFIFGPLLQYNILVGSIVGGIYLGFCFNAGAPAVEAFIEKVSRRSNFEFGRARMFGCVGWALCASIVGIMFTINNQFVFWLGSGCALILAVLLFFAKTDAPSSATVANAVGANHSAFSLKLALELFRQPKLWFLSLYVIGVSCTYDVFDQQFANFFTSFFATGEQGTRVFGYVTTMGELLNASIMFFAPLIINRIGGKNALLLAGTIMSVRIIGSSFATSALEVVILKTLHMFEVPFLLVGCFKYITSQFEVRFSATIYLVCFCFFKQLAMIFMSVLAGNMYESIGFQGAYLVLGLVALGFTLISVFTLSGPGPLSLLRRQVNEVA</sequence>
<name>LACY_ECOLI</name>
<proteinExistence type="evidence at protein level"/>
<comment type="function">
    <text evidence="3 4 6 7 8">Responsible for transport of beta-galactosides into the cell, with the concomitant import of a proton (symport system). Can transport lactose, melibiose, the synthetic disaccharide lactulose or the analog methyl-1-thio-beta,D-galactopyranoside (TMG), but not sucrose or fructose (PubMed:18177889, PubMed:1848449, PubMed:22106930, PubMed:7000781, PubMed:7028742). The substrate specificity is directed toward the galactopyranosyl moiety of the substrate (PubMed:22106930).</text>
</comment>
<comment type="catalytic activity">
    <reaction evidence="4 7 8">
        <text>lactose(in) + H(+)(in) = lactose(out) + H(+)(out)</text>
        <dbReference type="Rhea" id="RHEA:28867"/>
        <dbReference type="ChEBI" id="CHEBI:15378"/>
        <dbReference type="ChEBI" id="CHEBI:17716"/>
    </reaction>
    <physiologicalReaction direction="right-to-left" evidence="4 7 8">
        <dbReference type="Rhea" id="RHEA:28869"/>
    </physiologicalReaction>
</comment>
<comment type="catalytic activity">
    <reaction evidence="4">
        <text>melibiose(in) + H(+)(in) = melibiose(out) + H(+)(out)</text>
        <dbReference type="Rhea" id="RHEA:28855"/>
        <dbReference type="ChEBI" id="CHEBI:15378"/>
        <dbReference type="ChEBI" id="CHEBI:28053"/>
    </reaction>
    <physiologicalReaction direction="right-to-left" evidence="4">
        <dbReference type="Rhea" id="RHEA:28857"/>
    </physiologicalReaction>
</comment>
<comment type="activity regulation">
    <text evidence="7">Inhibited by the proton ionophore carbonyl cyanide m-chlorophenylhydrazone (CCCP).</text>
</comment>
<comment type="biophysicochemical properties">
    <kinetics>
        <KM evidence="3">0.62 mM for lactose</KM>
        <KM evidence="3">0.24 mM for melibiose</KM>
        <KM evidence="6">0.24 mM for lactulose</KM>
        <KM evidence="3">0.54 mM for TMG</KM>
        <Vmax evidence="3">191.0 nmol/min/mg enzyme with lactose as substrate</Vmax>
        <Vmax evidence="3">105.0 nmol/min/mg enzyme with melibiose as substrate</Vmax>
        <Vmax evidence="6">49.0 nmol/min/mg enzyme with lactulose as substrate</Vmax>
        <Vmax evidence="3">180.0 nmol/min/mg enzyme with TMG as substrate</Vmax>
    </kinetics>
</comment>
<comment type="subunit">
    <text>Monomer.</text>
</comment>
<comment type="subcellular location">
    <subcellularLocation>
        <location evidence="5 7 8">Cell inner membrane</location>
        <topology evidence="5">Multi-pass membrane protein</topology>
    </subcellularLocation>
</comment>
<comment type="mass spectrometry" mass="47357.0" method="Electrospray" evidence="1"/>
<comment type="similarity">
    <text evidence="10">Belongs to the major facilitator superfamily. Oligosaccharide:H(+) symporter (OHS) (TC 2.A.1.5) family.</text>
</comment>
<evidence type="ECO:0000269" key="1">
    <source>
    </source>
</evidence>
<evidence type="ECO:0000269" key="2">
    <source>
    </source>
</evidence>
<evidence type="ECO:0000269" key="3">
    <source>
    </source>
</evidence>
<evidence type="ECO:0000269" key="4">
    <source>
    </source>
</evidence>
<evidence type="ECO:0000269" key="5">
    <source>
    </source>
</evidence>
<evidence type="ECO:0000269" key="6">
    <source>
    </source>
</evidence>
<evidence type="ECO:0000269" key="7">
    <source>
    </source>
</evidence>
<evidence type="ECO:0000269" key="8">
    <source>
    </source>
</evidence>
<evidence type="ECO:0000303" key="9">
    <source>
    </source>
</evidence>
<evidence type="ECO:0000305" key="10"/>
<evidence type="ECO:0000305" key="11">
    <source>
    </source>
</evidence>
<evidence type="ECO:0007744" key="12">
    <source>
        <dbReference type="PDB" id="1PV6"/>
    </source>
</evidence>
<evidence type="ECO:0007744" key="13">
    <source>
        <dbReference type="PDB" id="1PV7"/>
    </source>
</evidence>
<evidence type="ECO:0007829" key="14">
    <source>
        <dbReference type="PDB" id="1PV6"/>
    </source>
</evidence>
<evidence type="ECO:0007829" key="15">
    <source>
        <dbReference type="PDB" id="2CFQ"/>
    </source>
</evidence>
<evidence type="ECO:0007829" key="16">
    <source>
        <dbReference type="PDB" id="2Y5Y"/>
    </source>
</evidence>
<evidence type="ECO:0007829" key="17">
    <source>
        <dbReference type="PDB" id="6VBG"/>
    </source>
</evidence>
<dbReference type="EMBL" id="J01636">
    <property type="protein sequence ID" value="AAA24054.1"/>
    <property type="molecule type" value="Genomic_DNA"/>
</dbReference>
<dbReference type="EMBL" id="V00295">
    <property type="protein sequence ID" value="CAA23571.1"/>
    <property type="molecule type" value="Genomic_DNA"/>
</dbReference>
<dbReference type="EMBL" id="X56095">
    <property type="protein sequence ID" value="CAA39575.1"/>
    <property type="molecule type" value="Genomic_DNA"/>
</dbReference>
<dbReference type="EMBL" id="U73857">
    <property type="protein sequence ID" value="AAB18067.1"/>
    <property type="molecule type" value="Genomic_DNA"/>
</dbReference>
<dbReference type="EMBL" id="U00096">
    <property type="protein sequence ID" value="AAC73446.1"/>
    <property type="molecule type" value="Genomic_DNA"/>
</dbReference>
<dbReference type="EMBL" id="AP009048">
    <property type="protein sequence ID" value="BAE76125.1"/>
    <property type="molecule type" value="Genomic_DNA"/>
</dbReference>
<dbReference type="PIR" id="A03418">
    <property type="entry name" value="GREC"/>
</dbReference>
<dbReference type="RefSeq" id="NP_414877.1">
    <property type="nucleotide sequence ID" value="NC_000913.3"/>
</dbReference>
<dbReference type="RefSeq" id="WP_000291549.1">
    <property type="nucleotide sequence ID" value="NZ_SSZK01000061.1"/>
</dbReference>
<dbReference type="PDB" id="1PV6">
    <property type="method" value="X-ray"/>
    <property type="resolution" value="3.50 A"/>
    <property type="chains" value="A/B=1-417"/>
</dbReference>
<dbReference type="PDB" id="1PV7">
    <property type="method" value="X-ray"/>
    <property type="resolution" value="3.60 A"/>
    <property type="chains" value="A/B=1-417"/>
</dbReference>
<dbReference type="PDB" id="2CFP">
    <property type="method" value="X-ray"/>
    <property type="resolution" value="3.30 A"/>
    <property type="chains" value="A=1-417"/>
</dbReference>
<dbReference type="PDB" id="2CFQ">
    <property type="method" value="X-ray"/>
    <property type="resolution" value="2.95 A"/>
    <property type="chains" value="A=1-417"/>
</dbReference>
<dbReference type="PDB" id="2V8N">
    <property type="method" value="X-ray"/>
    <property type="resolution" value="3.60 A"/>
    <property type="chains" value="A/B=1-417"/>
</dbReference>
<dbReference type="PDB" id="2Y5Y">
    <property type="method" value="X-ray"/>
    <property type="resolution" value="3.38 A"/>
    <property type="chains" value="A/B=1-417"/>
</dbReference>
<dbReference type="PDB" id="4ZYR">
    <property type="method" value="X-ray"/>
    <property type="resolution" value="3.31 A"/>
    <property type="chains" value="A/B=1-417"/>
</dbReference>
<dbReference type="PDB" id="5GXB">
    <property type="method" value="X-ray"/>
    <property type="resolution" value="3.30 A"/>
    <property type="chains" value="A=1-417"/>
</dbReference>
<dbReference type="PDB" id="6C9W">
    <property type="method" value="X-ray"/>
    <property type="resolution" value="3.00 A"/>
    <property type="chains" value="A=1-417"/>
</dbReference>
<dbReference type="PDB" id="6VBG">
    <property type="method" value="X-ray"/>
    <property type="resolution" value="2.80 A"/>
    <property type="chains" value="A/B=1-417"/>
</dbReference>
<dbReference type="PDB" id="8Y9Y">
    <property type="method" value="EM"/>
    <property type="resolution" value="3.29 A"/>
    <property type="chains" value="B=315-334"/>
</dbReference>
<dbReference type="PDB" id="8YA0">
    <property type="method" value="EM"/>
    <property type="resolution" value="2.97 A"/>
    <property type="chains" value="B=316-332"/>
</dbReference>
<dbReference type="PDB" id="8YA2">
    <property type="method" value="EM"/>
    <property type="resolution" value="3.84 A"/>
    <property type="chains" value="B=284-288, B=315-334"/>
</dbReference>
<dbReference type="PDB" id="8YA3">
    <property type="method" value="EM"/>
    <property type="resolution" value="3.27 A"/>
    <property type="chains" value="B=315-334"/>
</dbReference>
<dbReference type="PDBsum" id="1PV6"/>
<dbReference type="PDBsum" id="1PV7"/>
<dbReference type="PDBsum" id="2CFP"/>
<dbReference type="PDBsum" id="2CFQ"/>
<dbReference type="PDBsum" id="2V8N"/>
<dbReference type="PDBsum" id="2Y5Y"/>
<dbReference type="PDBsum" id="4ZYR"/>
<dbReference type="PDBsum" id="5GXB"/>
<dbReference type="PDBsum" id="6C9W"/>
<dbReference type="PDBsum" id="6VBG"/>
<dbReference type="PDBsum" id="8Y9Y"/>
<dbReference type="PDBsum" id="8YA0"/>
<dbReference type="PDBsum" id="8YA2"/>
<dbReference type="PDBsum" id="8YA3"/>
<dbReference type="EMDB" id="EMD-39085"/>
<dbReference type="EMDB" id="EMD-39087"/>
<dbReference type="EMDB" id="EMD-39088"/>
<dbReference type="EMDB" id="EMD-39090"/>
<dbReference type="PCDDB" id="P02920"/>
<dbReference type="SMR" id="P02920"/>
<dbReference type="BioGRID" id="4263185">
    <property type="interactions" value="8"/>
</dbReference>
<dbReference type="DIP" id="DIP-10080N"/>
<dbReference type="FunCoup" id="P02920">
    <property type="interactions" value="91"/>
</dbReference>
<dbReference type="IntAct" id="P02920">
    <property type="interactions" value="1"/>
</dbReference>
<dbReference type="STRING" id="511145.b0343"/>
<dbReference type="DrugBank" id="DB04396">
    <property type="generic name" value="Thiodigalactoside"/>
</dbReference>
<dbReference type="TCDB" id="2.A.1.5.1">
    <property type="family name" value="the major facilitator superfamily (mfs)"/>
</dbReference>
<dbReference type="PaxDb" id="511145-b0343"/>
<dbReference type="ABCD" id="P02920">
    <property type="antibodies" value="2 sequenced antibodies"/>
</dbReference>
<dbReference type="EnsemblBacteria" id="AAC73446">
    <property type="protein sequence ID" value="AAC73446"/>
    <property type="gene ID" value="b0343"/>
</dbReference>
<dbReference type="GeneID" id="75202506"/>
<dbReference type="GeneID" id="949083"/>
<dbReference type="KEGG" id="ecj:JW0334"/>
<dbReference type="KEGG" id="eco:b0343"/>
<dbReference type="KEGG" id="ecoc:C3026_01680"/>
<dbReference type="KEGG" id="ecoc:C3026_24850"/>
<dbReference type="PATRIC" id="fig|1411691.4.peg.1934"/>
<dbReference type="EchoBASE" id="EB0521"/>
<dbReference type="eggNOG" id="COG2223">
    <property type="taxonomic scope" value="Bacteria"/>
</dbReference>
<dbReference type="HOGENOM" id="CLU_055585_0_0_6"/>
<dbReference type="InParanoid" id="P02920"/>
<dbReference type="OMA" id="KNFWIFG"/>
<dbReference type="OrthoDB" id="7065110at2"/>
<dbReference type="PhylomeDB" id="P02920"/>
<dbReference type="BioCyc" id="EcoCyc:LACY-MONOMER"/>
<dbReference type="BioCyc" id="MetaCyc:LACY-MONOMER"/>
<dbReference type="BRENDA" id="2.7.1.207">
    <property type="organism ID" value="2026"/>
</dbReference>
<dbReference type="EvolutionaryTrace" id="P02920"/>
<dbReference type="PRO" id="PR:P02920"/>
<dbReference type="Proteomes" id="UP000000625">
    <property type="component" value="Chromosome"/>
</dbReference>
<dbReference type="GO" id="GO:0016020">
    <property type="term" value="C:membrane"/>
    <property type="evidence" value="ECO:0000314"/>
    <property type="project" value="EcoliWiki"/>
</dbReference>
<dbReference type="GO" id="GO:0005886">
    <property type="term" value="C:plasma membrane"/>
    <property type="evidence" value="ECO:0000314"/>
    <property type="project" value="EcoCyc"/>
</dbReference>
<dbReference type="GO" id="GO:0005351">
    <property type="term" value="F:carbohydrate:proton symporter activity"/>
    <property type="evidence" value="ECO:0000314"/>
    <property type="project" value="EcoliWiki"/>
</dbReference>
<dbReference type="GO" id="GO:0030395">
    <property type="term" value="F:lactose binding"/>
    <property type="evidence" value="ECO:0000314"/>
    <property type="project" value="EcoliWiki"/>
</dbReference>
<dbReference type="GO" id="GO:0015528">
    <property type="term" value="F:lactose:proton symporter activity"/>
    <property type="evidence" value="ECO:0000314"/>
    <property type="project" value="EcoCyc"/>
</dbReference>
<dbReference type="GO" id="GO:0008643">
    <property type="term" value="P:carbohydrate transport"/>
    <property type="evidence" value="ECO:0000315"/>
    <property type="project" value="CACAO"/>
</dbReference>
<dbReference type="GO" id="GO:0015767">
    <property type="term" value="P:lactose transport"/>
    <property type="evidence" value="ECO:0000314"/>
    <property type="project" value="EcoCyc"/>
</dbReference>
<dbReference type="CDD" id="cd06172">
    <property type="entry name" value="MFS_LacY"/>
    <property type="match status" value="1"/>
</dbReference>
<dbReference type="FunFam" id="1.20.1250.20:FF:000075">
    <property type="entry name" value="Lactose permease"/>
    <property type="match status" value="1"/>
</dbReference>
<dbReference type="FunFam" id="1.20.1250.20:FF:000081">
    <property type="entry name" value="Lactose permease"/>
    <property type="match status" value="1"/>
</dbReference>
<dbReference type="Gene3D" id="1.20.1250.20">
    <property type="entry name" value="MFS general substrate transporter like domains"/>
    <property type="match status" value="2"/>
</dbReference>
<dbReference type="InterPro" id="IPR000576">
    <property type="entry name" value="LacY/RafB_perm_fam"/>
</dbReference>
<dbReference type="InterPro" id="IPR018457">
    <property type="entry name" value="LacY/RafB_perm_fam_CS"/>
</dbReference>
<dbReference type="InterPro" id="IPR020846">
    <property type="entry name" value="MFS_dom"/>
</dbReference>
<dbReference type="InterPro" id="IPR036259">
    <property type="entry name" value="MFS_trans_sf"/>
</dbReference>
<dbReference type="NCBIfam" id="TIGR00882">
    <property type="entry name" value="2A0105"/>
    <property type="match status" value="1"/>
</dbReference>
<dbReference type="NCBIfam" id="NF007077">
    <property type="entry name" value="PRK09528.1"/>
    <property type="match status" value="1"/>
</dbReference>
<dbReference type="PANTHER" id="PTHR23522:SF10">
    <property type="entry name" value="3-PHENYLPROPIONIC ACID TRANSPORTER-RELATED"/>
    <property type="match status" value="1"/>
</dbReference>
<dbReference type="PANTHER" id="PTHR23522">
    <property type="entry name" value="BLL5896 PROTEIN"/>
    <property type="match status" value="1"/>
</dbReference>
<dbReference type="Pfam" id="PF01306">
    <property type="entry name" value="LacY_symp"/>
    <property type="match status" value="1"/>
</dbReference>
<dbReference type="PRINTS" id="PR00174">
    <property type="entry name" value="LACYSMPORT"/>
</dbReference>
<dbReference type="SUPFAM" id="SSF103473">
    <property type="entry name" value="MFS general substrate transporter"/>
    <property type="match status" value="1"/>
</dbReference>
<dbReference type="PROSITE" id="PS00896">
    <property type="entry name" value="LACY_1"/>
    <property type="match status" value="1"/>
</dbReference>
<dbReference type="PROSITE" id="PS00897">
    <property type="entry name" value="LACY_2"/>
    <property type="match status" value="1"/>
</dbReference>
<dbReference type="PROSITE" id="PS50850">
    <property type="entry name" value="MFS"/>
    <property type="match status" value="1"/>
</dbReference>
<gene>
    <name evidence="9" type="primary">lacY</name>
    <name type="ordered locus">b0343</name>
    <name type="ordered locus">JW0334</name>
</gene>
<accession>P02920</accession>
<accession>Q2MC81</accession>